<keyword id="KW-0414">Isoprene biosynthesis</keyword>
<keyword id="KW-0460">Magnesium</keyword>
<keyword id="KW-0479">Metal-binding</keyword>
<keyword id="KW-0784">Thiamine biosynthesis</keyword>
<keyword id="KW-0786">Thiamine pyrophosphate</keyword>
<keyword id="KW-0808">Transferase</keyword>
<organism>
    <name type="scientific">Aliivibrio fischeri (strain MJ11)</name>
    <name type="common">Vibrio fischeri</name>
    <dbReference type="NCBI Taxonomy" id="388396"/>
    <lineage>
        <taxon>Bacteria</taxon>
        <taxon>Pseudomonadati</taxon>
        <taxon>Pseudomonadota</taxon>
        <taxon>Gammaproteobacteria</taxon>
        <taxon>Vibrionales</taxon>
        <taxon>Vibrionaceae</taxon>
        <taxon>Aliivibrio</taxon>
    </lineage>
</organism>
<sequence length="627" mass="68662">MSLDISKYPILALANTPDELRSLPKESLPALCDELRTYLLNSVSKTSGHLASGLGVVELTVALHYVYNTPFDQLIWDVGHQAYPHKILTGRREQLSTIRQKDGLHPFPWRGESEYDVLSVGHSSTSISAALGLAICAEKEQENRKIVSVIGDGAITAGMAFEALNHAGDIHPDMLVVLNDNEMSISENVGALNNQLARVLSGSLYTSIREGGKKVLSGTPTIKELLKRTEEHLKGMVVPGTMFEELGFNYIGPVDGHDVNELVRTLKNMRNLKGPQFLHIMTKKGKGYEPAEKDPISYHGVPKFDPSNTSLPKSSGGKPTFSAVFGDFLCDMAKEDSKLMAITPAMREGSGMVRFSKEYPNQYFDAAIAEQHAVTLASGMAIAGYNPIVAIYSTFLQRGYDQLIHDVAIMDLPVMFAIDRAGLVGADGQTHQGAFDISFMRCIPNMVIMTPSDENECRQMLYTGHKHTGPSAVRYPRGSATGIQVNNEMQALEIGKGRLLRETKVTDKGERVAILNFGTFLANSLEAAEKLDATVADMRFAKPLDEALICELVTNHDVLVTIEENAISGGAGSGVIEFLMKNRLVKPVLQLGLPDEFIAQGTQEEMHIELKLDSNGIEQQIRDYLDL</sequence>
<reference key="1">
    <citation type="submission" date="2008-08" db="EMBL/GenBank/DDBJ databases">
        <title>Complete sequence of Vibrio fischeri strain MJ11.</title>
        <authorList>
            <person name="Mandel M.J."/>
            <person name="Stabb E.V."/>
            <person name="Ruby E.G."/>
            <person name="Ferriera S."/>
            <person name="Johnson J."/>
            <person name="Kravitz S."/>
            <person name="Beeson K."/>
            <person name="Sutton G."/>
            <person name="Rogers Y.-H."/>
            <person name="Friedman R."/>
            <person name="Frazier M."/>
            <person name="Venter J.C."/>
        </authorList>
    </citation>
    <scope>NUCLEOTIDE SEQUENCE [LARGE SCALE GENOMIC DNA]</scope>
    <source>
        <strain>MJ11</strain>
    </source>
</reference>
<dbReference type="EC" id="2.2.1.7" evidence="1"/>
<dbReference type="EMBL" id="CP001139">
    <property type="protein sequence ID" value="ACH66901.1"/>
    <property type="molecule type" value="Genomic_DNA"/>
</dbReference>
<dbReference type="RefSeq" id="WP_012534059.1">
    <property type="nucleotide sequence ID" value="NC_011184.1"/>
</dbReference>
<dbReference type="SMR" id="B5FBG6"/>
<dbReference type="KEGG" id="vfm:VFMJ11_0731"/>
<dbReference type="HOGENOM" id="CLU_009227_1_4_6"/>
<dbReference type="UniPathway" id="UPA00064">
    <property type="reaction ID" value="UER00091"/>
</dbReference>
<dbReference type="Proteomes" id="UP000001857">
    <property type="component" value="Chromosome I"/>
</dbReference>
<dbReference type="GO" id="GO:0005829">
    <property type="term" value="C:cytosol"/>
    <property type="evidence" value="ECO:0007669"/>
    <property type="project" value="TreeGrafter"/>
</dbReference>
<dbReference type="GO" id="GO:0008661">
    <property type="term" value="F:1-deoxy-D-xylulose-5-phosphate synthase activity"/>
    <property type="evidence" value="ECO:0007669"/>
    <property type="project" value="UniProtKB-UniRule"/>
</dbReference>
<dbReference type="GO" id="GO:0000287">
    <property type="term" value="F:magnesium ion binding"/>
    <property type="evidence" value="ECO:0007669"/>
    <property type="project" value="UniProtKB-UniRule"/>
</dbReference>
<dbReference type="GO" id="GO:0030976">
    <property type="term" value="F:thiamine pyrophosphate binding"/>
    <property type="evidence" value="ECO:0007669"/>
    <property type="project" value="UniProtKB-UniRule"/>
</dbReference>
<dbReference type="GO" id="GO:0052865">
    <property type="term" value="P:1-deoxy-D-xylulose 5-phosphate biosynthetic process"/>
    <property type="evidence" value="ECO:0007669"/>
    <property type="project" value="UniProtKB-UniPathway"/>
</dbReference>
<dbReference type="GO" id="GO:0019288">
    <property type="term" value="P:isopentenyl diphosphate biosynthetic process, methylerythritol 4-phosphate pathway"/>
    <property type="evidence" value="ECO:0007669"/>
    <property type="project" value="TreeGrafter"/>
</dbReference>
<dbReference type="GO" id="GO:0016114">
    <property type="term" value="P:terpenoid biosynthetic process"/>
    <property type="evidence" value="ECO:0007669"/>
    <property type="project" value="UniProtKB-UniRule"/>
</dbReference>
<dbReference type="GO" id="GO:0009228">
    <property type="term" value="P:thiamine biosynthetic process"/>
    <property type="evidence" value="ECO:0007669"/>
    <property type="project" value="UniProtKB-UniRule"/>
</dbReference>
<dbReference type="CDD" id="cd02007">
    <property type="entry name" value="TPP_DXS"/>
    <property type="match status" value="1"/>
</dbReference>
<dbReference type="CDD" id="cd07033">
    <property type="entry name" value="TPP_PYR_DXS_TK_like"/>
    <property type="match status" value="1"/>
</dbReference>
<dbReference type="FunFam" id="3.40.50.920:FF:000002">
    <property type="entry name" value="1-deoxy-D-xylulose-5-phosphate synthase"/>
    <property type="match status" value="1"/>
</dbReference>
<dbReference type="FunFam" id="3.40.50.970:FF:000005">
    <property type="entry name" value="1-deoxy-D-xylulose-5-phosphate synthase"/>
    <property type="match status" value="1"/>
</dbReference>
<dbReference type="Gene3D" id="3.40.50.920">
    <property type="match status" value="1"/>
</dbReference>
<dbReference type="Gene3D" id="3.40.50.970">
    <property type="match status" value="2"/>
</dbReference>
<dbReference type="HAMAP" id="MF_00315">
    <property type="entry name" value="DXP_synth"/>
    <property type="match status" value="1"/>
</dbReference>
<dbReference type="InterPro" id="IPR005477">
    <property type="entry name" value="Dxylulose-5-P_synthase"/>
</dbReference>
<dbReference type="InterPro" id="IPR029061">
    <property type="entry name" value="THDP-binding"/>
</dbReference>
<dbReference type="InterPro" id="IPR009014">
    <property type="entry name" value="Transketo_C/PFOR_II"/>
</dbReference>
<dbReference type="InterPro" id="IPR005475">
    <property type="entry name" value="Transketolase-like_Pyr-bd"/>
</dbReference>
<dbReference type="InterPro" id="IPR020826">
    <property type="entry name" value="Transketolase_BS"/>
</dbReference>
<dbReference type="InterPro" id="IPR033248">
    <property type="entry name" value="Transketolase_C"/>
</dbReference>
<dbReference type="InterPro" id="IPR049557">
    <property type="entry name" value="Transketolase_CS"/>
</dbReference>
<dbReference type="NCBIfam" id="TIGR00204">
    <property type="entry name" value="dxs"/>
    <property type="match status" value="1"/>
</dbReference>
<dbReference type="NCBIfam" id="NF003933">
    <property type="entry name" value="PRK05444.2-2"/>
    <property type="match status" value="1"/>
</dbReference>
<dbReference type="PANTHER" id="PTHR43322">
    <property type="entry name" value="1-D-DEOXYXYLULOSE 5-PHOSPHATE SYNTHASE-RELATED"/>
    <property type="match status" value="1"/>
</dbReference>
<dbReference type="PANTHER" id="PTHR43322:SF5">
    <property type="entry name" value="1-DEOXY-D-XYLULOSE-5-PHOSPHATE SYNTHASE, CHLOROPLASTIC"/>
    <property type="match status" value="1"/>
</dbReference>
<dbReference type="Pfam" id="PF13292">
    <property type="entry name" value="DXP_synthase_N"/>
    <property type="match status" value="1"/>
</dbReference>
<dbReference type="Pfam" id="PF02779">
    <property type="entry name" value="Transket_pyr"/>
    <property type="match status" value="1"/>
</dbReference>
<dbReference type="Pfam" id="PF02780">
    <property type="entry name" value="Transketolase_C"/>
    <property type="match status" value="1"/>
</dbReference>
<dbReference type="SMART" id="SM00861">
    <property type="entry name" value="Transket_pyr"/>
    <property type="match status" value="1"/>
</dbReference>
<dbReference type="SUPFAM" id="SSF52518">
    <property type="entry name" value="Thiamin diphosphate-binding fold (THDP-binding)"/>
    <property type="match status" value="2"/>
</dbReference>
<dbReference type="SUPFAM" id="SSF52922">
    <property type="entry name" value="TK C-terminal domain-like"/>
    <property type="match status" value="1"/>
</dbReference>
<dbReference type="PROSITE" id="PS00801">
    <property type="entry name" value="TRANSKETOLASE_1"/>
    <property type="match status" value="1"/>
</dbReference>
<dbReference type="PROSITE" id="PS00802">
    <property type="entry name" value="TRANSKETOLASE_2"/>
    <property type="match status" value="1"/>
</dbReference>
<gene>
    <name evidence="1" type="primary">dxs</name>
    <name type="ordered locus">VFMJ11_0731</name>
</gene>
<name>DXS_ALIFM</name>
<comment type="function">
    <text evidence="1">Catalyzes the acyloin condensation reaction between C atoms 2 and 3 of pyruvate and glyceraldehyde 3-phosphate to yield 1-deoxy-D-xylulose-5-phosphate (DXP).</text>
</comment>
<comment type="catalytic activity">
    <reaction evidence="1">
        <text>D-glyceraldehyde 3-phosphate + pyruvate + H(+) = 1-deoxy-D-xylulose 5-phosphate + CO2</text>
        <dbReference type="Rhea" id="RHEA:12605"/>
        <dbReference type="ChEBI" id="CHEBI:15361"/>
        <dbReference type="ChEBI" id="CHEBI:15378"/>
        <dbReference type="ChEBI" id="CHEBI:16526"/>
        <dbReference type="ChEBI" id="CHEBI:57792"/>
        <dbReference type="ChEBI" id="CHEBI:59776"/>
        <dbReference type="EC" id="2.2.1.7"/>
    </reaction>
</comment>
<comment type="cofactor">
    <cofactor evidence="1">
        <name>Mg(2+)</name>
        <dbReference type="ChEBI" id="CHEBI:18420"/>
    </cofactor>
    <text evidence="1">Binds 1 Mg(2+) ion per subunit.</text>
</comment>
<comment type="cofactor">
    <cofactor evidence="1">
        <name>thiamine diphosphate</name>
        <dbReference type="ChEBI" id="CHEBI:58937"/>
    </cofactor>
    <text evidence="1">Binds 1 thiamine pyrophosphate per subunit.</text>
</comment>
<comment type="pathway">
    <text evidence="1">Metabolic intermediate biosynthesis; 1-deoxy-D-xylulose 5-phosphate biosynthesis; 1-deoxy-D-xylulose 5-phosphate from D-glyceraldehyde 3-phosphate and pyruvate: step 1/1.</text>
</comment>
<comment type="subunit">
    <text evidence="1">Homodimer.</text>
</comment>
<comment type="similarity">
    <text evidence="1">Belongs to the transketolase family. DXPS subfamily.</text>
</comment>
<protein>
    <recommendedName>
        <fullName evidence="1">1-deoxy-D-xylulose-5-phosphate synthase</fullName>
        <ecNumber evidence="1">2.2.1.7</ecNumber>
    </recommendedName>
    <alternativeName>
        <fullName evidence="1">1-deoxyxylulose-5-phosphate synthase</fullName>
        <shortName evidence="1">DXP synthase</shortName>
        <shortName evidence="1">DXPS</shortName>
    </alternativeName>
</protein>
<evidence type="ECO:0000255" key="1">
    <source>
        <dbReference type="HAMAP-Rule" id="MF_00315"/>
    </source>
</evidence>
<proteinExistence type="inferred from homology"/>
<feature type="chain" id="PRO_1000115779" description="1-deoxy-D-xylulose-5-phosphate synthase">
    <location>
        <begin position="1"/>
        <end position="627"/>
    </location>
</feature>
<feature type="binding site" evidence="1">
    <location>
        <position position="80"/>
    </location>
    <ligand>
        <name>thiamine diphosphate</name>
        <dbReference type="ChEBI" id="CHEBI:58937"/>
    </ligand>
</feature>
<feature type="binding site" evidence="1">
    <location>
        <begin position="121"/>
        <end position="123"/>
    </location>
    <ligand>
        <name>thiamine diphosphate</name>
        <dbReference type="ChEBI" id="CHEBI:58937"/>
    </ligand>
</feature>
<feature type="binding site" evidence="1">
    <location>
        <position position="152"/>
    </location>
    <ligand>
        <name>Mg(2+)</name>
        <dbReference type="ChEBI" id="CHEBI:18420"/>
    </ligand>
</feature>
<feature type="binding site" evidence="1">
    <location>
        <begin position="153"/>
        <end position="154"/>
    </location>
    <ligand>
        <name>thiamine diphosphate</name>
        <dbReference type="ChEBI" id="CHEBI:58937"/>
    </ligand>
</feature>
<feature type="binding site" evidence="1">
    <location>
        <position position="181"/>
    </location>
    <ligand>
        <name>Mg(2+)</name>
        <dbReference type="ChEBI" id="CHEBI:18420"/>
    </ligand>
</feature>
<feature type="binding site" evidence="1">
    <location>
        <position position="181"/>
    </location>
    <ligand>
        <name>thiamine diphosphate</name>
        <dbReference type="ChEBI" id="CHEBI:58937"/>
    </ligand>
</feature>
<feature type="binding site" evidence="1">
    <location>
        <position position="288"/>
    </location>
    <ligand>
        <name>thiamine diphosphate</name>
        <dbReference type="ChEBI" id="CHEBI:58937"/>
    </ligand>
</feature>
<feature type="binding site" evidence="1">
    <location>
        <position position="370"/>
    </location>
    <ligand>
        <name>thiamine diphosphate</name>
        <dbReference type="ChEBI" id="CHEBI:58937"/>
    </ligand>
</feature>
<accession>B5FBG6</accession>